<organism>
    <name type="scientific">Methylorubrum populi (strain ATCC BAA-705 / NCIMB 13946 / BJ001)</name>
    <name type="common">Methylobacterium populi</name>
    <dbReference type="NCBI Taxonomy" id="441620"/>
    <lineage>
        <taxon>Bacteria</taxon>
        <taxon>Pseudomonadati</taxon>
        <taxon>Pseudomonadota</taxon>
        <taxon>Alphaproteobacteria</taxon>
        <taxon>Hyphomicrobiales</taxon>
        <taxon>Methylobacteriaceae</taxon>
        <taxon>Methylorubrum</taxon>
    </lineage>
</organism>
<name>CYSN_METPB</name>
<comment type="function">
    <text evidence="2">With CysD forms the ATP sulfurylase (ATPS) that catalyzes the adenylation of sulfate producing adenosine 5'-phosphosulfate (APS) and diphosphate, the first enzymatic step in sulfur assimilation pathway. APS synthesis involves the formation of a high-energy phosphoric-sulfuric acid anhydride bond driven by GTP hydrolysis by CysN coupled to ATP hydrolysis by CysD.</text>
</comment>
<comment type="catalytic activity">
    <reaction evidence="2">
        <text>sulfate + ATP + H(+) = adenosine 5'-phosphosulfate + diphosphate</text>
        <dbReference type="Rhea" id="RHEA:18133"/>
        <dbReference type="ChEBI" id="CHEBI:15378"/>
        <dbReference type="ChEBI" id="CHEBI:16189"/>
        <dbReference type="ChEBI" id="CHEBI:30616"/>
        <dbReference type="ChEBI" id="CHEBI:33019"/>
        <dbReference type="ChEBI" id="CHEBI:58243"/>
        <dbReference type="EC" id="2.7.7.4"/>
    </reaction>
</comment>
<comment type="pathway">
    <text evidence="2">Sulfur metabolism; hydrogen sulfide biosynthesis; sulfite from sulfate: step 1/3.</text>
</comment>
<comment type="subunit">
    <text evidence="2">Heterodimer composed of CysD, the smaller subunit, and CysN.</text>
</comment>
<comment type="similarity">
    <text evidence="2">Belongs to the TRAFAC class translation factor GTPase superfamily. Classic translation factor GTPase family. CysN/NodQ subfamily.</text>
</comment>
<protein>
    <recommendedName>
        <fullName evidence="2">Sulfate adenylyltransferase subunit 1</fullName>
        <ecNumber evidence="2">2.7.7.4</ecNumber>
    </recommendedName>
    <alternativeName>
        <fullName evidence="2">ATP-sulfurylase large subunit</fullName>
    </alternativeName>
    <alternativeName>
        <fullName evidence="2">Sulfate adenylate transferase</fullName>
        <shortName evidence="2">SAT</shortName>
    </alternativeName>
</protein>
<keyword id="KW-0067">ATP-binding</keyword>
<keyword id="KW-0342">GTP-binding</keyword>
<keyword id="KW-0547">Nucleotide-binding</keyword>
<keyword id="KW-0548">Nucleotidyltransferase</keyword>
<keyword id="KW-0808">Transferase</keyword>
<evidence type="ECO:0000250" key="1"/>
<evidence type="ECO:0000255" key="2">
    <source>
        <dbReference type="HAMAP-Rule" id="MF_00062"/>
    </source>
</evidence>
<feature type="chain" id="PRO_1000092147" description="Sulfate adenylyltransferase subunit 1">
    <location>
        <begin position="1"/>
        <end position="470"/>
    </location>
</feature>
<feature type="domain" description="tr-type G">
    <location>
        <begin position="22"/>
        <end position="237"/>
    </location>
</feature>
<feature type="region of interest" description="G1" evidence="1">
    <location>
        <begin position="31"/>
        <end position="38"/>
    </location>
</feature>
<feature type="region of interest" description="G2" evidence="1">
    <location>
        <begin position="89"/>
        <end position="93"/>
    </location>
</feature>
<feature type="region of interest" description="G3" evidence="1">
    <location>
        <begin position="110"/>
        <end position="113"/>
    </location>
</feature>
<feature type="region of interest" description="G4" evidence="1">
    <location>
        <begin position="165"/>
        <end position="168"/>
    </location>
</feature>
<feature type="region of interest" description="G5" evidence="1">
    <location>
        <begin position="202"/>
        <end position="204"/>
    </location>
</feature>
<feature type="binding site" evidence="2">
    <location>
        <begin position="31"/>
        <end position="38"/>
    </location>
    <ligand>
        <name>GTP</name>
        <dbReference type="ChEBI" id="CHEBI:37565"/>
    </ligand>
</feature>
<feature type="binding site" evidence="2">
    <location>
        <begin position="110"/>
        <end position="114"/>
    </location>
    <ligand>
        <name>GTP</name>
        <dbReference type="ChEBI" id="CHEBI:37565"/>
    </ligand>
</feature>
<feature type="binding site" evidence="2">
    <location>
        <begin position="165"/>
        <end position="168"/>
    </location>
    <ligand>
        <name>GTP</name>
        <dbReference type="ChEBI" id="CHEBI:37565"/>
    </ligand>
</feature>
<sequence length="470" mass="50252">MTIHQSPEAFGYDAFLRTHQSKEVLRFITCGSVDDGKSTLIGRLLHDTKQIFDDQVTALQRDSRKHGTQGAEVDLALLVDGLQAEREQGITIDVAYRFFSTDRRSFIVADTPGHEQYTRNMATGASTADVAVILVDARHGLTRQTRRHALLVSLLGIHRVALAINKMDLVGWSQDKFDAILSGFQAFAAPLNFSEVRAIPLSAKNGDNVVLPGTAATWYDGVPLLRYLEEVPVKSEERAAAFRMPVQWVNRPNSDFRGFSGLIASGSVAPGDAVTVAPSGKTSTVARIFTADGDLERASEGQSVTLVLADEVDASRGAVIATSDAPLTLTDSLDVRLFWAAETDLAPGASLWAKVGTQTVNAVVKAVHRRIDPETGQAGPADKLAVNDIGDVTLTLDRQIAVDPYVENRDTGSLILIDRETTDTAALGLVQTVVAATKAVTPAPTASESKAQEPARSGGLLAGIKRLFGG</sequence>
<gene>
    <name evidence="2" type="primary">cysN</name>
    <name type="ordered locus">Mpop_2190</name>
</gene>
<proteinExistence type="inferred from homology"/>
<dbReference type="EC" id="2.7.7.4" evidence="2"/>
<dbReference type="EMBL" id="CP001029">
    <property type="protein sequence ID" value="ACB80352.1"/>
    <property type="molecule type" value="Genomic_DNA"/>
</dbReference>
<dbReference type="RefSeq" id="WP_012454086.1">
    <property type="nucleotide sequence ID" value="NC_010725.1"/>
</dbReference>
<dbReference type="SMR" id="B1Z7C0"/>
<dbReference type="STRING" id="441620.Mpop_2190"/>
<dbReference type="KEGG" id="mpo:Mpop_2190"/>
<dbReference type="eggNOG" id="COG2895">
    <property type="taxonomic scope" value="Bacteria"/>
</dbReference>
<dbReference type="HOGENOM" id="CLU_007265_5_2_5"/>
<dbReference type="OrthoDB" id="9804504at2"/>
<dbReference type="UniPathway" id="UPA00140">
    <property type="reaction ID" value="UER00204"/>
</dbReference>
<dbReference type="Proteomes" id="UP000007136">
    <property type="component" value="Chromosome"/>
</dbReference>
<dbReference type="GO" id="GO:0005524">
    <property type="term" value="F:ATP binding"/>
    <property type="evidence" value="ECO:0007669"/>
    <property type="project" value="UniProtKB-KW"/>
</dbReference>
<dbReference type="GO" id="GO:0005525">
    <property type="term" value="F:GTP binding"/>
    <property type="evidence" value="ECO:0007669"/>
    <property type="project" value="UniProtKB-UniRule"/>
</dbReference>
<dbReference type="GO" id="GO:0003924">
    <property type="term" value="F:GTPase activity"/>
    <property type="evidence" value="ECO:0007669"/>
    <property type="project" value="InterPro"/>
</dbReference>
<dbReference type="GO" id="GO:0004781">
    <property type="term" value="F:sulfate adenylyltransferase (ATP) activity"/>
    <property type="evidence" value="ECO:0007669"/>
    <property type="project" value="UniProtKB-UniRule"/>
</dbReference>
<dbReference type="GO" id="GO:0070814">
    <property type="term" value="P:hydrogen sulfide biosynthetic process"/>
    <property type="evidence" value="ECO:0007669"/>
    <property type="project" value="UniProtKB-UniRule"/>
</dbReference>
<dbReference type="GO" id="GO:0000103">
    <property type="term" value="P:sulfate assimilation"/>
    <property type="evidence" value="ECO:0007669"/>
    <property type="project" value="UniProtKB-UniRule"/>
</dbReference>
<dbReference type="CDD" id="cd04166">
    <property type="entry name" value="CysN_ATPS"/>
    <property type="match status" value="1"/>
</dbReference>
<dbReference type="CDD" id="cd03695">
    <property type="entry name" value="CysN_NodQ_II"/>
    <property type="match status" value="1"/>
</dbReference>
<dbReference type="CDD" id="cd04095">
    <property type="entry name" value="CysN_NoDQ_III"/>
    <property type="match status" value="1"/>
</dbReference>
<dbReference type="FunFam" id="3.40.50.300:FF:000119">
    <property type="entry name" value="Sulfate adenylyltransferase subunit 1"/>
    <property type="match status" value="1"/>
</dbReference>
<dbReference type="Gene3D" id="3.40.50.300">
    <property type="entry name" value="P-loop containing nucleotide triphosphate hydrolases"/>
    <property type="match status" value="1"/>
</dbReference>
<dbReference type="Gene3D" id="2.40.30.10">
    <property type="entry name" value="Translation factors"/>
    <property type="match status" value="2"/>
</dbReference>
<dbReference type="HAMAP" id="MF_00062">
    <property type="entry name" value="Sulf_adenylyltr_sub1"/>
    <property type="match status" value="1"/>
</dbReference>
<dbReference type="InterPro" id="IPR041757">
    <property type="entry name" value="CysN_GTP-bd"/>
</dbReference>
<dbReference type="InterPro" id="IPR044138">
    <property type="entry name" value="CysN_II"/>
</dbReference>
<dbReference type="InterPro" id="IPR044139">
    <property type="entry name" value="CysN_NoDQ_III"/>
</dbReference>
<dbReference type="InterPro" id="IPR031157">
    <property type="entry name" value="G_TR_CS"/>
</dbReference>
<dbReference type="InterPro" id="IPR054696">
    <property type="entry name" value="GTP-eEF1A_C"/>
</dbReference>
<dbReference type="InterPro" id="IPR027417">
    <property type="entry name" value="P-loop_NTPase"/>
</dbReference>
<dbReference type="InterPro" id="IPR011779">
    <property type="entry name" value="SO4_adenylTrfase_lsu"/>
</dbReference>
<dbReference type="InterPro" id="IPR000795">
    <property type="entry name" value="T_Tr_GTP-bd_dom"/>
</dbReference>
<dbReference type="InterPro" id="IPR050100">
    <property type="entry name" value="TRAFAC_GTPase_members"/>
</dbReference>
<dbReference type="InterPro" id="IPR009000">
    <property type="entry name" value="Transl_B-barrel_sf"/>
</dbReference>
<dbReference type="InterPro" id="IPR009001">
    <property type="entry name" value="Transl_elong_EF1A/Init_IF2_C"/>
</dbReference>
<dbReference type="NCBIfam" id="TIGR02034">
    <property type="entry name" value="CysN"/>
    <property type="match status" value="1"/>
</dbReference>
<dbReference type="NCBIfam" id="NF003478">
    <property type="entry name" value="PRK05124.1"/>
    <property type="match status" value="1"/>
</dbReference>
<dbReference type="PANTHER" id="PTHR23115">
    <property type="entry name" value="TRANSLATION FACTOR"/>
    <property type="match status" value="1"/>
</dbReference>
<dbReference type="Pfam" id="PF22594">
    <property type="entry name" value="GTP-eEF1A_C"/>
    <property type="match status" value="1"/>
</dbReference>
<dbReference type="Pfam" id="PF00009">
    <property type="entry name" value="GTP_EFTU"/>
    <property type="match status" value="1"/>
</dbReference>
<dbReference type="PRINTS" id="PR00315">
    <property type="entry name" value="ELONGATNFCT"/>
</dbReference>
<dbReference type="SUPFAM" id="SSF50465">
    <property type="entry name" value="EF-Tu/eEF-1alpha/eIF2-gamma C-terminal domain"/>
    <property type="match status" value="1"/>
</dbReference>
<dbReference type="SUPFAM" id="SSF52540">
    <property type="entry name" value="P-loop containing nucleoside triphosphate hydrolases"/>
    <property type="match status" value="1"/>
</dbReference>
<dbReference type="SUPFAM" id="SSF50447">
    <property type="entry name" value="Translation proteins"/>
    <property type="match status" value="1"/>
</dbReference>
<dbReference type="PROSITE" id="PS00301">
    <property type="entry name" value="G_TR_1"/>
    <property type="match status" value="1"/>
</dbReference>
<dbReference type="PROSITE" id="PS51722">
    <property type="entry name" value="G_TR_2"/>
    <property type="match status" value="1"/>
</dbReference>
<reference key="1">
    <citation type="submission" date="2008-04" db="EMBL/GenBank/DDBJ databases">
        <title>Complete sequence of chromosome of Methylobacterium populi BJ001.</title>
        <authorList>
            <consortium name="US DOE Joint Genome Institute"/>
            <person name="Copeland A."/>
            <person name="Lucas S."/>
            <person name="Lapidus A."/>
            <person name="Glavina del Rio T."/>
            <person name="Dalin E."/>
            <person name="Tice H."/>
            <person name="Bruce D."/>
            <person name="Goodwin L."/>
            <person name="Pitluck S."/>
            <person name="Chertkov O."/>
            <person name="Brettin T."/>
            <person name="Detter J.C."/>
            <person name="Han C."/>
            <person name="Kuske C.R."/>
            <person name="Schmutz J."/>
            <person name="Larimer F."/>
            <person name="Land M."/>
            <person name="Hauser L."/>
            <person name="Kyrpides N."/>
            <person name="Mikhailova N."/>
            <person name="Marx C."/>
            <person name="Richardson P."/>
        </authorList>
    </citation>
    <scope>NUCLEOTIDE SEQUENCE [LARGE SCALE GENOMIC DNA]</scope>
    <source>
        <strain>ATCC BAA-705 / NCIMB 13946 / BJ001</strain>
    </source>
</reference>
<accession>B1Z7C0</accession>